<sequence>MGVERIKAAFENGKKAFIPYVMGGDGGLEILKERMRFLDEAGASIVEIGIPFSDPVADGPTIQRAGKRALDSGVTVKGIFQALIEVRKEVQIPFVLMTYLNPVLAFGKERFIERCLEAGVDGIIVPDLPYEEQDIIAPLLREANIALIPLVTVTSPIERIKKITSESEGFVYAVTVAGVTGVRQNFKDEIHSYLEKVKSHTHLPVVAGFGISTKEHVEEMVTICDGVVVGSKVIELLENEKREEICEFIQATKQKEEA</sequence>
<organism>
    <name type="scientific">Bacillus cereus (strain AH820)</name>
    <dbReference type="NCBI Taxonomy" id="405535"/>
    <lineage>
        <taxon>Bacteria</taxon>
        <taxon>Bacillati</taxon>
        <taxon>Bacillota</taxon>
        <taxon>Bacilli</taxon>
        <taxon>Bacillales</taxon>
        <taxon>Bacillaceae</taxon>
        <taxon>Bacillus</taxon>
        <taxon>Bacillus cereus group</taxon>
    </lineage>
</organism>
<keyword id="KW-0028">Amino-acid biosynthesis</keyword>
<keyword id="KW-0057">Aromatic amino acid biosynthesis</keyword>
<keyword id="KW-0456">Lyase</keyword>
<keyword id="KW-0822">Tryptophan biosynthesis</keyword>
<accession>B7JET1</accession>
<name>TRPA_BACC0</name>
<proteinExistence type="inferred from homology"/>
<feature type="chain" id="PRO_1000117729" description="Tryptophan synthase alpha chain">
    <location>
        <begin position="1"/>
        <end position="258"/>
    </location>
</feature>
<feature type="active site" description="Proton acceptor" evidence="1">
    <location>
        <position position="47"/>
    </location>
</feature>
<feature type="active site" description="Proton acceptor" evidence="1">
    <location>
        <position position="58"/>
    </location>
</feature>
<evidence type="ECO:0000255" key="1">
    <source>
        <dbReference type="HAMAP-Rule" id="MF_00131"/>
    </source>
</evidence>
<gene>
    <name evidence="1" type="primary">trpA</name>
    <name type="ordered locus">BCAH820_1322</name>
</gene>
<protein>
    <recommendedName>
        <fullName evidence="1">Tryptophan synthase alpha chain</fullName>
        <ecNumber evidence="1">4.2.1.20</ecNumber>
    </recommendedName>
</protein>
<dbReference type="EC" id="4.2.1.20" evidence="1"/>
<dbReference type="EMBL" id="CP001283">
    <property type="protein sequence ID" value="ACK89202.1"/>
    <property type="molecule type" value="Genomic_DNA"/>
</dbReference>
<dbReference type="RefSeq" id="WP_000537942.1">
    <property type="nucleotide sequence ID" value="NC_011773.1"/>
</dbReference>
<dbReference type="SMR" id="B7JET1"/>
<dbReference type="KEGG" id="bcu:BCAH820_1322"/>
<dbReference type="HOGENOM" id="CLU_016734_0_0_9"/>
<dbReference type="UniPathway" id="UPA00035">
    <property type="reaction ID" value="UER00044"/>
</dbReference>
<dbReference type="Proteomes" id="UP000001363">
    <property type="component" value="Chromosome"/>
</dbReference>
<dbReference type="GO" id="GO:0005829">
    <property type="term" value="C:cytosol"/>
    <property type="evidence" value="ECO:0007669"/>
    <property type="project" value="TreeGrafter"/>
</dbReference>
<dbReference type="GO" id="GO:0004834">
    <property type="term" value="F:tryptophan synthase activity"/>
    <property type="evidence" value="ECO:0007669"/>
    <property type="project" value="UniProtKB-UniRule"/>
</dbReference>
<dbReference type="CDD" id="cd04724">
    <property type="entry name" value="Tryptophan_synthase_alpha"/>
    <property type="match status" value="1"/>
</dbReference>
<dbReference type="FunFam" id="3.20.20.70:FF:000037">
    <property type="entry name" value="Tryptophan synthase alpha chain"/>
    <property type="match status" value="1"/>
</dbReference>
<dbReference type="Gene3D" id="3.20.20.70">
    <property type="entry name" value="Aldolase class I"/>
    <property type="match status" value="1"/>
</dbReference>
<dbReference type="HAMAP" id="MF_00131">
    <property type="entry name" value="Trp_synth_alpha"/>
    <property type="match status" value="1"/>
</dbReference>
<dbReference type="InterPro" id="IPR013785">
    <property type="entry name" value="Aldolase_TIM"/>
</dbReference>
<dbReference type="InterPro" id="IPR011060">
    <property type="entry name" value="RibuloseP-bd_barrel"/>
</dbReference>
<dbReference type="InterPro" id="IPR018204">
    <property type="entry name" value="Trp_synthase_alpha_AS"/>
</dbReference>
<dbReference type="InterPro" id="IPR002028">
    <property type="entry name" value="Trp_synthase_suA"/>
</dbReference>
<dbReference type="NCBIfam" id="TIGR00262">
    <property type="entry name" value="trpA"/>
    <property type="match status" value="1"/>
</dbReference>
<dbReference type="PANTHER" id="PTHR43406:SF1">
    <property type="entry name" value="TRYPTOPHAN SYNTHASE ALPHA CHAIN, CHLOROPLASTIC"/>
    <property type="match status" value="1"/>
</dbReference>
<dbReference type="PANTHER" id="PTHR43406">
    <property type="entry name" value="TRYPTOPHAN SYNTHASE, ALPHA CHAIN"/>
    <property type="match status" value="1"/>
</dbReference>
<dbReference type="Pfam" id="PF00290">
    <property type="entry name" value="Trp_syntA"/>
    <property type="match status" value="1"/>
</dbReference>
<dbReference type="SUPFAM" id="SSF51366">
    <property type="entry name" value="Ribulose-phoshate binding barrel"/>
    <property type="match status" value="1"/>
</dbReference>
<dbReference type="PROSITE" id="PS00167">
    <property type="entry name" value="TRP_SYNTHASE_ALPHA"/>
    <property type="match status" value="1"/>
</dbReference>
<comment type="function">
    <text evidence="1">The alpha subunit is responsible for the aldol cleavage of indoleglycerol phosphate to indole and glyceraldehyde 3-phosphate.</text>
</comment>
<comment type="catalytic activity">
    <reaction evidence="1">
        <text>(1S,2R)-1-C-(indol-3-yl)glycerol 3-phosphate + L-serine = D-glyceraldehyde 3-phosphate + L-tryptophan + H2O</text>
        <dbReference type="Rhea" id="RHEA:10532"/>
        <dbReference type="ChEBI" id="CHEBI:15377"/>
        <dbReference type="ChEBI" id="CHEBI:33384"/>
        <dbReference type="ChEBI" id="CHEBI:57912"/>
        <dbReference type="ChEBI" id="CHEBI:58866"/>
        <dbReference type="ChEBI" id="CHEBI:59776"/>
        <dbReference type="EC" id="4.2.1.20"/>
    </reaction>
</comment>
<comment type="pathway">
    <text evidence="1">Amino-acid biosynthesis; L-tryptophan biosynthesis; L-tryptophan from chorismate: step 5/5.</text>
</comment>
<comment type="subunit">
    <text evidence="1">Tetramer of two alpha and two beta chains.</text>
</comment>
<comment type="similarity">
    <text evidence="1">Belongs to the TrpA family.</text>
</comment>
<reference key="1">
    <citation type="submission" date="2008-10" db="EMBL/GenBank/DDBJ databases">
        <title>Genome sequence of Bacillus cereus AH820.</title>
        <authorList>
            <person name="Dodson R.J."/>
            <person name="Durkin A.S."/>
            <person name="Rosovitz M.J."/>
            <person name="Rasko D.A."/>
            <person name="Hoffmaster A."/>
            <person name="Ravel J."/>
            <person name="Sutton G."/>
        </authorList>
    </citation>
    <scope>NUCLEOTIDE SEQUENCE [LARGE SCALE GENOMIC DNA]</scope>
    <source>
        <strain>AH820</strain>
    </source>
</reference>